<feature type="chain" id="PRO_0000122811" description="Protein RecA">
    <location>
        <begin position="1"/>
        <end position="352"/>
    </location>
</feature>
<feature type="binding site" evidence="1">
    <location>
        <begin position="74"/>
        <end position="81"/>
    </location>
    <ligand>
        <name>ATP</name>
        <dbReference type="ChEBI" id="CHEBI:30616"/>
    </ligand>
</feature>
<reference key="1">
    <citation type="journal article" date="2002" name="Nature">
        <title>Genome sequence of the plant pathogen Ralstonia solanacearum.</title>
        <authorList>
            <person name="Salanoubat M."/>
            <person name="Genin S."/>
            <person name="Artiguenave F."/>
            <person name="Gouzy J."/>
            <person name="Mangenot S."/>
            <person name="Arlat M."/>
            <person name="Billault A."/>
            <person name="Brottier P."/>
            <person name="Camus J.-C."/>
            <person name="Cattolico L."/>
            <person name="Chandler M."/>
            <person name="Choisne N."/>
            <person name="Claudel-Renard C."/>
            <person name="Cunnac S."/>
            <person name="Demange N."/>
            <person name="Gaspin C."/>
            <person name="Lavie M."/>
            <person name="Moisan A."/>
            <person name="Robert C."/>
            <person name="Saurin W."/>
            <person name="Schiex T."/>
            <person name="Siguier P."/>
            <person name="Thebault P."/>
            <person name="Whalen M."/>
            <person name="Wincker P."/>
            <person name="Levy M."/>
            <person name="Weissenbach J."/>
            <person name="Boucher C.A."/>
        </authorList>
    </citation>
    <scope>NUCLEOTIDE SEQUENCE [LARGE SCALE GENOMIC DNA]</scope>
    <source>
        <strain>ATCC BAA-1114 / GMI1000</strain>
    </source>
</reference>
<comment type="function">
    <text evidence="1">Can catalyze the hydrolysis of ATP in the presence of single-stranded DNA, the ATP-dependent uptake of single-stranded DNA by duplex DNA, and the ATP-dependent hybridization of homologous single-stranded DNAs. It interacts with LexA causing its activation and leading to its autocatalytic cleavage.</text>
</comment>
<comment type="subcellular location">
    <subcellularLocation>
        <location evidence="1">Cytoplasm</location>
    </subcellularLocation>
</comment>
<comment type="similarity">
    <text evidence="1">Belongs to the RecA family.</text>
</comment>
<proteinExistence type="inferred from homology"/>
<sequence>MEDGKKAASMSAEKQKALAAALAQIEKQFGKGSIMKMGDAEVEPVQVVSTGSLGLDVALGVGGLPRGRVVEIYGPESSGKTTLTLQVVAEMQKLGGTCAFIDAEHALDVTYADKLGVKVPDLLISQPDTGEQALEIADALVRSGSVDLIVIDSVAALVPKAEIEGEMGDALPGLQARLMSQALRKLTGTIKRTNCLVIFINQIRMKIGVMFGSPETTTGGNALKFYASVRLDIRRIGSIKKGDEVVGNETKVKVVKNKVAPPFREAIFDILYGAGVSREGEIIDLGVEAKVVEKSGAWYSYNGERIGQGRDNCREFLRENAELAREIENKVREHLGVTPMGAVTLAEEVEED</sequence>
<accession>Q8Y1Y6</accession>
<name>RECA_RALN1</name>
<evidence type="ECO:0000255" key="1">
    <source>
        <dbReference type="HAMAP-Rule" id="MF_00268"/>
    </source>
</evidence>
<protein>
    <recommendedName>
        <fullName evidence="1">Protein RecA</fullName>
    </recommendedName>
    <alternativeName>
        <fullName evidence="1">Recombinase A</fullName>
    </alternativeName>
</protein>
<gene>
    <name evidence="1" type="primary">recA</name>
    <name type="ordered locus">RSc0551</name>
    <name type="ORF">RS04915</name>
</gene>
<keyword id="KW-0067">ATP-binding</keyword>
<keyword id="KW-0963">Cytoplasm</keyword>
<keyword id="KW-0227">DNA damage</keyword>
<keyword id="KW-0233">DNA recombination</keyword>
<keyword id="KW-0234">DNA repair</keyword>
<keyword id="KW-0238">DNA-binding</keyword>
<keyword id="KW-0547">Nucleotide-binding</keyword>
<keyword id="KW-1185">Reference proteome</keyword>
<keyword id="KW-0742">SOS response</keyword>
<organism>
    <name type="scientific">Ralstonia nicotianae (strain ATCC BAA-1114 / GMI1000)</name>
    <name type="common">Ralstonia solanacearum</name>
    <dbReference type="NCBI Taxonomy" id="267608"/>
    <lineage>
        <taxon>Bacteria</taxon>
        <taxon>Pseudomonadati</taxon>
        <taxon>Pseudomonadota</taxon>
        <taxon>Betaproteobacteria</taxon>
        <taxon>Burkholderiales</taxon>
        <taxon>Burkholderiaceae</taxon>
        <taxon>Ralstonia</taxon>
        <taxon>Ralstonia solanacearum species complex</taxon>
    </lineage>
</organism>
<dbReference type="EMBL" id="AL646052">
    <property type="protein sequence ID" value="CAD14079.1"/>
    <property type="molecule type" value="Genomic_DNA"/>
</dbReference>
<dbReference type="RefSeq" id="WP_011000510.1">
    <property type="nucleotide sequence ID" value="NC_003295.1"/>
</dbReference>
<dbReference type="SMR" id="Q8Y1Y6"/>
<dbReference type="STRING" id="267608.RSc0551"/>
<dbReference type="EnsemblBacteria" id="CAD14079">
    <property type="protein sequence ID" value="CAD14079"/>
    <property type="gene ID" value="RSc0551"/>
</dbReference>
<dbReference type="KEGG" id="rso:RSc0551"/>
<dbReference type="eggNOG" id="COG0468">
    <property type="taxonomic scope" value="Bacteria"/>
</dbReference>
<dbReference type="HOGENOM" id="CLU_040469_3_2_4"/>
<dbReference type="Proteomes" id="UP000001436">
    <property type="component" value="Chromosome"/>
</dbReference>
<dbReference type="GO" id="GO:0005829">
    <property type="term" value="C:cytosol"/>
    <property type="evidence" value="ECO:0007669"/>
    <property type="project" value="TreeGrafter"/>
</dbReference>
<dbReference type="GO" id="GO:0005524">
    <property type="term" value="F:ATP binding"/>
    <property type="evidence" value="ECO:0007669"/>
    <property type="project" value="UniProtKB-UniRule"/>
</dbReference>
<dbReference type="GO" id="GO:0016887">
    <property type="term" value="F:ATP hydrolysis activity"/>
    <property type="evidence" value="ECO:0007669"/>
    <property type="project" value="InterPro"/>
</dbReference>
<dbReference type="GO" id="GO:0140664">
    <property type="term" value="F:ATP-dependent DNA damage sensor activity"/>
    <property type="evidence" value="ECO:0007669"/>
    <property type="project" value="InterPro"/>
</dbReference>
<dbReference type="GO" id="GO:0003684">
    <property type="term" value="F:damaged DNA binding"/>
    <property type="evidence" value="ECO:0007669"/>
    <property type="project" value="UniProtKB-UniRule"/>
</dbReference>
<dbReference type="GO" id="GO:0003697">
    <property type="term" value="F:single-stranded DNA binding"/>
    <property type="evidence" value="ECO:0007669"/>
    <property type="project" value="UniProtKB-UniRule"/>
</dbReference>
<dbReference type="GO" id="GO:0006310">
    <property type="term" value="P:DNA recombination"/>
    <property type="evidence" value="ECO:0007669"/>
    <property type="project" value="UniProtKB-UniRule"/>
</dbReference>
<dbReference type="GO" id="GO:0006281">
    <property type="term" value="P:DNA repair"/>
    <property type="evidence" value="ECO:0007669"/>
    <property type="project" value="UniProtKB-UniRule"/>
</dbReference>
<dbReference type="GO" id="GO:0009432">
    <property type="term" value="P:SOS response"/>
    <property type="evidence" value="ECO:0007669"/>
    <property type="project" value="UniProtKB-UniRule"/>
</dbReference>
<dbReference type="CDD" id="cd00983">
    <property type="entry name" value="RecA"/>
    <property type="match status" value="1"/>
</dbReference>
<dbReference type="FunFam" id="3.40.50.300:FF:000087">
    <property type="entry name" value="Recombinase RecA"/>
    <property type="match status" value="1"/>
</dbReference>
<dbReference type="Gene3D" id="3.40.50.300">
    <property type="entry name" value="P-loop containing nucleotide triphosphate hydrolases"/>
    <property type="match status" value="1"/>
</dbReference>
<dbReference type="HAMAP" id="MF_00268">
    <property type="entry name" value="RecA"/>
    <property type="match status" value="1"/>
</dbReference>
<dbReference type="InterPro" id="IPR003593">
    <property type="entry name" value="AAA+_ATPase"/>
</dbReference>
<dbReference type="InterPro" id="IPR013765">
    <property type="entry name" value="DNA_recomb/repair_RecA"/>
</dbReference>
<dbReference type="InterPro" id="IPR020584">
    <property type="entry name" value="DNA_recomb/repair_RecA_CS"/>
</dbReference>
<dbReference type="InterPro" id="IPR027417">
    <property type="entry name" value="P-loop_NTPase"/>
</dbReference>
<dbReference type="InterPro" id="IPR049261">
    <property type="entry name" value="RecA-like_C"/>
</dbReference>
<dbReference type="InterPro" id="IPR049428">
    <property type="entry name" value="RecA-like_N"/>
</dbReference>
<dbReference type="InterPro" id="IPR020588">
    <property type="entry name" value="RecA_ATP-bd"/>
</dbReference>
<dbReference type="InterPro" id="IPR023400">
    <property type="entry name" value="RecA_C_sf"/>
</dbReference>
<dbReference type="InterPro" id="IPR020587">
    <property type="entry name" value="RecA_monomer-monomer_interface"/>
</dbReference>
<dbReference type="NCBIfam" id="TIGR02012">
    <property type="entry name" value="tigrfam_recA"/>
    <property type="match status" value="1"/>
</dbReference>
<dbReference type="PANTHER" id="PTHR45900:SF1">
    <property type="entry name" value="MITOCHONDRIAL DNA REPAIR PROTEIN RECA HOMOLOG-RELATED"/>
    <property type="match status" value="1"/>
</dbReference>
<dbReference type="PANTHER" id="PTHR45900">
    <property type="entry name" value="RECA"/>
    <property type="match status" value="1"/>
</dbReference>
<dbReference type="Pfam" id="PF00154">
    <property type="entry name" value="RecA"/>
    <property type="match status" value="1"/>
</dbReference>
<dbReference type="Pfam" id="PF21096">
    <property type="entry name" value="RecA_C"/>
    <property type="match status" value="1"/>
</dbReference>
<dbReference type="PRINTS" id="PR00142">
    <property type="entry name" value="RECA"/>
</dbReference>
<dbReference type="SMART" id="SM00382">
    <property type="entry name" value="AAA"/>
    <property type="match status" value="1"/>
</dbReference>
<dbReference type="SUPFAM" id="SSF52540">
    <property type="entry name" value="P-loop containing nucleoside triphosphate hydrolases"/>
    <property type="match status" value="1"/>
</dbReference>
<dbReference type="SUPFAM" id="SSF54752">
    <property type="entry name" value="RecA protein, C-terminal domain"/>
    <property type="match status" value="1"/>
</dbReference>
<dbReference type="PROSITE" id="PS00321">
    <property type="entry name" value="RECA_1"/>
    <property type="match status" value="1"/>
</dbReference>
<dbReference type="PROSITE" id="PS50162">
    <property type="entry name" value="RECA_2"/>
    <property type="match status" value="1"/>
</dbReference>
<dbReference type="PROSITE" id="PS50163">
    <property type="entry name" value="RECA_3"/>
    <property type="match status" value="1"/>
</dbReference>